<evidence type="ECO:0000255" key="1">
    <source>
        <dbReference type="HAMAP-Rule" id="MF_01347"/>
    </source>
</evidence>
<comment type="function">
    <text evidence="1">Produces ATP from ADP in the presence of a proton gradient across the membrane. The catalytic sites are hosted primarily by the beta subunits.</text>
</comment>
<comment type="catalytic activity">
    <reaction evidence="1">
        <text>ATP + H2O + 4 H(+)(in) = ADP + phosphate + 5 H(+)(out)</text>
        <dbReference type="Rhea" id="RHEA:57720"/>
        <dbReference type="ChEBI" id="CHEBI:15377"/>
        <dbReference type="ChEBI" id="CHEBI:15378"/>
        <dbReference type="ChEBI" id="CHEBI:30616"/>
        <dbReference type="ChEBI" id="CHEBI:43474"/>
        <dbReference type="ChEBI" id="CHEBI:456216"/>
        <dbReference type="EC" id="7.1.2.2"/>
    </reaction>
</comment>
<comment type="subunit">
    <text evidence="1">F-type ATPases have 2 components, CF(1) - the catalytic core - and CF(0) - the membrane proton channel. CF(1) has five subunits: alpha(3), beta(3), gamma(1), delta(1), epsilon(1). CF(0) has three main subunits: a(1), b(2) and c(9-12). The alpha and beta chains form an alternating ring which encloses part of the gamma chain. CF(1) is attached to CF(0) by a central stalk formed by the gamma and epsilon chains, while a peripheral stalk is formed by the delta and b chains.</text>
</comment>
<comment type="subcellular location">
    <subcellularLocation>
        <location evidence="1">Cell membrane</location>
        <topology evidence="1">Peripheral membrane protein</topology>
    </subcellularLocation>
</comment>
<comment type="similarity">
    <text evidence="1">Belongs to the ATPase alpha/beta chains family.</text>
</comment>
<feature type="chain" id="PRO_0000339519" description="ATP synthase subunit beta">
    <location>
        <begin position="1"/>
        <end position="463"/>
    </location>
</feature>
<feature type="binding site" evidence="1">
    <location>
        <begin position="151"/>
        <end position="158"/>
    </location>
    <ligand>
        <name>ATP</name>
        <dbReference type="ChEBI" id="CHEBI:30616"/>
    </ligand>
</feature>
<organism>
    <name type="scientific">Clostridium botulinum (strain Loch Maree / Type A3)</name>
    <dbReference type="NCBI Taxonomy" id="498214"/>
    <lineage>
        <taxon>Bacteria</taxon>
        <taxon>Bacillati</taxon>
        <taxon>Bacillota</taxon>
        <taxon>Clostridia</taxon>
        <taxon>Eubacteriales</taxon>
        <taxon>Clostridiaceae</taxon>
        <taxon>Clostridium</taxon>
    </lineage>
</organism>
<dbReference type="EC" id="7.1.2.2" evidence="1"/>
<dbReference type="EMBL" id="CP000962">
    <property type="protein sequence ID" value="ACA55129.1"/>
    <property type="molecule type" value="Genomic_DNA"/>
</dbReference>
<dbReference type="SMR" id="B1KSS8"/>
<dbReference type="KEGG" id="cbl:CLK_3331"/>
<dbReference type="HOGENOM" id="CLU_022398_0_2_9"/>
<dbReference type="GO" id="GO:0005886">
    <property type="term" value="C:plasma membrane"/>
    <property type="evidence" value="ECO:0007669"/>
    <property type="project" value="UniProtKB-SubCell"/>
</dbReference>
<dbReference type="GO" id="GO:0045259">
    <property type="term" value="C:proton-transporting ATP synthase complex"/>
    <property type="evidence" value="ECO:0007669"/>
    <property type="project" value="UniProtKB-KW"/>
</dbReference>
<dbReference type="GO" id="GO:0005524">
    <property type="term" value="F:ATP binding"/>
    <property type="evidence" value="ECO:0007669"/>
    <property type="project" value="UniProtKB-UniRule"/>
</dbReference>
<dbReference type="GO" id="GO:0016887">
    <property type="term" value="F:ATP hydrolysis activity"/>
    <property type="evidence" value="ECO:0007669"/>
    <property type="project" value="InterPro"/>
</dbReference>
<dbReference type="GO" id="GO:0046933">
    <property type="term" value="F:proton-transporting ATP synthase activity, rotational mechanism"/>
    <property type="evidence" value="ECO:0007669"/>
    <property type="project" value="UniProtKB-UniRule"/>
</dbReference>
<dbReference type="CDD" id="cd18110">
    <property type="entry name" value="ATP-synt_F1_beta_C"/>
    <property type="match status" value="1"/>
</dbReference>
<dbReference type="CDD" id="cd18115">
    <property type="entry name" value="ATP-synt_F1_beta_N"/>
    <property type="match status" value="1"/>
</dbReference>
<dbReference type="CDD" id="cd01133">
    <property type="entry name" value="F1-ATPase_beta_CD"/>
    <property type="match status" value="1"/>
</dbReference>
<dbReference type="FunFam" id="1.10.1140.10:FF:000001">
    <property type="entry name" value="ATP synthase subunit beta"/>
    <property type="match status" value="1"/>
</dbReference>
<dbReference type="FunFam" id="3.40.50.300:FF:000026">
    <property type="entry name" value="ATP synthase subunit beta"/>
    <property type="match status" value="1"/>
</dbReference>
<dbReference type="Gene3D" id="2.40.10.170">
    <property type="match status" value="1"/>
</dbReference>
<dbReference type="Gene3D" id="1.10.1140.10">
    <property type="entry name" value="Bovine Mitochondrial F1-atpase, Atp Synthase Beta Chain, Chain D, domain 3"/>
    <property type="match status" value="1"/>
</dbReference>
<dbReference type="Gene3D" id="3.40.50.300">
    <property type="entry name" value="P-loop containing nucleotide triphosphate hydrolases"/>
    <property type="match status" value="1"/>
</dbReference>
<dbReference type="HAMAP" id="MF_01347">
    <property type="entry name" value="ATP_synth_beta_bact"/>
    <property type="match status" value="1"/>
</dbReference>
<dbReference type="InterPro" id="IPR003593">
    <property type="entry name" value="AAA+_ATPase"/>
</dbReference>
<dbReference type="InterPro" id="IPR055190">
    <property type="entry name" value="ATP-synt_VA_C"/>
</dbReference>
<dbReference type="InterPro" id="IPR005722">
    <property type="entry name" value="ATP_synth_F1_bsu"/>
</dbReference>
<dbReference type="InterPro" id="IPR020003">
    <property type="entry name" value="ATPase_a/bsu_AS"/>
</dbReference>
<dbReference type="InterPro" id="IPR050053">
    <property type="entry name" value="ATPase_alpha/beta_chains"/>
</dbReference>
<dbReference type="InterPro" id="IPR004100">
    <property type="entry name" value="ATPase_F1/V1/A1_a/bsu_N"/>
</dbReference>
<dbReference type="InterPro" id="IPR036121">
    <property type="entry name" value="ATPase_F1/V1/A1_a/bsu_N_sf"/>
</dbReference>
<dbReference type="InterPro" id="IPR000194">
    <property type="entry name" value="ATPase_F1/V1/A1_a/bsu_nucl-bd"/>
</dbReference>
<dbReference type="InterPro" id="IPR024034">
    <property type="entry name" value="ATPase_F1/V1_b/a_C"/>
</dbReference>
<dbReference type="InterPro" id="IPR027417">
    <property type="entry name" value="P-loop_NTPase"/>
</dbReference>
<dbReference type="NCBIfam" id="TIGR01039">
    <property type="entry name" value="atpD"/>
    <property type="match status" value="1"/>
</dbReference>
<dbReference type="PANTHER" id="PTHR15184">
    <property type="entry name" value="ATP SYNTHASE"/>
    <property type="match status" value="1"/>
</dbReference>
<dbReference type="PANTHER" id="PTHR15184:SF71">
    <property type="entry name" value="ATP SYNTHASE SUBUNIT BETA, MITOCHONDRIAL"/>
    <property type="match status" value="1"/>
</dbReference>
<dbReference type="Pfam" id="PF00006">
    <property type="entry name" value="ATP-synt_ab"/>
    <property type="match status" value="1"/>
</dbReference>
<dbReference type="Pfam" id="PF02874">
    <property type="entry name" value="ATP-synt_ab_N"/>
    <property type="match status" value="1"/>
</dbReference>
<dbReference type="Pfam" id="PF22919">
    <property type="entry name" value="ATP-synt_VA_C"/>
    <property type="match status" value="1"/>
</dbReference>
<dbReference type="SMART" id="SM00382">
    <property type="entry name" value="AAA"/>
    <property type="match status" value="1"/>
</dbReference>
<dbReference type="SUPFAM" id="SSF47917">
    <property type="entry name" value="C-terminal domain of alpha and beta subunits of F1 ATP synthase"/>
    <property type="match status" value="1"/>
</dbReference>
<dbReference type="SUPFAM" id="SSF50615">
    <property type="entry name" value="N-terminal domain of alpha and beta subunits of F1 ATP synthase"/>
    <property type="match status" value="1"/>
</dbReference>
<dbReference type="SUPFAM" id="SSF52540">
    <property type="entry name" value="P-loop containing nucleoside triphosphate hydrolases"/>
    <property type="match status" value="1"/>
</dbReference>
<dbReference type="PROSITE" id="PS00152">
    <property type="entry name" value="ATPASE_ALPHA_BETA"/>
    <property type="match status" value="1"/>
</dbReference>
<reference key="1">
    <citation type="journal article" date="2007" name="PLoS ONE">
        <title>Analysis of the neurotoxin complex genes in Clostridium botulinum A1-A4 and B1 strains: BoNT/A3, /Ba4 and /B1 clusters are located within plasmids.</title>
        <authorList>
            <person name="Smith T.J."/>
            <person name="Hill K.K."/>
            <person name="Foley B.T."/>
            <person name="Detter J.C."/>
            <person name="Munk A.C."/>
            <person name="Bruce D.C."/>
            <person name="Doggett N.A."/>
            <person name="Smith L.A."/>
            <person name="Marks J.D."/>
            <person name="Xie G."/>
            <person name="Brettin T.S."/>
        </authorList>
    </citation>
    <scope>NUCLEOTIDE SEQUENCE [LARGE SCALE GENOMIC DNA]</scope>
    <source>
        <strain>Loch Maree / Type A3</strain>
    </source>
</reference>
<keyword id="KW-0066">ATP synthesis</keyword>
<keyword id="KW-0067">ATP-binding</keyword>
<keyword id="KW-1003">Cell membrane</keyword>
<keyword id="KW-0139">CF(1)</keyword>
<keyword id="KW-0375">Hydrogen ion transport</keyword>
<keyword id="KW-0406">Ion transport</keyword>
<keyword id="KW-0472">Membrane</keyword>
<keyword id="KW-0547">Nucleotide-binding</keyword>
<keyword id="KW-1278">Translocase</keyword>
<keyword id="KW-0813">Transport</keyword>
<protein>
    <recommendedName>
        <fullName evidence="1">ATP synthase subunit beta</fullName>
        <ecNumber evidence="1">7.1.2.2</ecNumber>
    </recommendedName>
    <alternativeName>
        <fullName evidence="1">ATP synthase F1 sector subunit beta</fullName>
    </alternativeName>
    <alternativeName>
        <fullName evidence="1">F-ATPase subunit beta</fullName>
    </alternativeName>
</protein>
<proteinExistence type="inferred from homology"/>
<accession>B1KSS8</accession>
<sequence length="463" mass="50777">MSNLGKVIQIIGPIIDIKFDSENLPDLFNALEINAGDRKVIAEVEQHIGDDTIRAIAMEDTEGLKRGMEALDTGKSVSVPVGKEVLGRLFNVLGKPIDGAGEFISEESYPIHRSAPSFEEQSVEPEIFETGIKVIDLLAPYQKGGKIGLFGGAGVGKTVLIQELINNIAKEHGGLSVFTGVGERTREGNDLYYEMKESGVLEKTALVFGQMNEPPGARMRVALTGLTMSEYFRDQGQDVLLFIDNIFRFTQAGSEVSALLGRIPSAVGYQPTLATEMGALQERITSTKNGSITSVQAVYVPADDLTDPAPATTFAHLDATTVLSRSITELGIYPAVDPLESSSRMLDPRIIGEEHYEVAIKVKNILERYRELQDIIAILGIDELSEEDKLVVGRARKIQRFLSQPFTVAEQFTGMQGKYVPIKETVRGFKEILEGKHDNIPESAFLFQGTIEDVLKKAQQMEI</sequence>
<name>ATPB_CLOBM</name>
<gene>
    <name evidence="1" type="primary">atpD</name>
    <name type="ordered locus">CLK_3331</name>
</gene>